<reference key="1">
    <citation type="submission" date="2006-10" db="EMBL/GenBank/DDBJ databases">
        <authorList>
            <person name="Fleischmann R.D."/>
            <person name="Dodson R.J."/>
            <person name="Haft D.H."/>
            <person name="Merkel J.S."/>
            <person name="Nelson W.C."/>
            <person name="Fraser C.M."/>
        </authorList>
    </citation>
    <scope>NUCLEOTIDE SEQUENCE [LARGE SCALE GENOMIC DNA]</scope>
    <source>
        <strain>104</strain>
    </source>
</reference>
<sequence>MPKPTKGPRLGGSSSHQKALLANLATSLFEHGRIKTTEPKARALRPYAEKLITHAKKGALHNRREVLKKIRDKDVVHVLFEEIGPFFADRNGGYTRIIKVEPRKGDNAPMAVIELVREKTVTSEADRARRVKASKKAPEAAAAAPQAAVEPEAVEAAPAPDAPEAAPEAEAAAPQPADEAEGSSED</sequence>
<comment type="subunit">
    <text evidence="1">Part of the 50S ribosomal subunit. Contacts protein L32.</text>
</comment>
<comment type="similarity">
    <text evidence="1">Belongs to the bacterial ribosomal protein bL17 family.</text>
</comment>
<keyword id="KW-0687">Ribonucleoprotein</keyword>
<keyword id="KW-0689">Ribosomal protein</keyword>
<name>RL17_MYCA1</name>
<dbReference type="EMBL" id="CP000479">
    <property type="protein sequence ID" value="ABK65648.1"/>
    <property type="molecule type" value="Genomic_DNA"/>
</dbReference>
<dbReference type="RefSeq" id="WP_009978951.1">
    <property type="nucleotide sequence ID" value="NC_008595.1"/>
</dbReference>
<dbReference type="SMR" id="A0QKU4"/>
<dbReference type="GeneID" id="75271911"/>
<dbReference type="KEGG" id="mav:MAV_4397"/>
<dbReference type="HOGENOM" id="CLU_074407_0_0_11"/>
<dbReference type="Proteomes" id="UP000001574">
    <property type="component" value="Chromosome"/>
</dbReference>
<dbReference type="GO" id="GO:0022625">
    <property type="term" value="C:cytosolic large ribosomal subunit"/>
    <property type="evidence" value="ECO:0007669"/>
    <property type="project" value="TreeGrafter"/>
</dbReference>
<dbReference type="GO" id="GO:0003735">
    <property type="term" value="F:structural constituent of ribosome"/>
    <property type="evidence" value="ECO:0007669"/>
    <property type="project" value="InterPro"/>
</dbReference>
<dbReference type="GO" id="GO:0006412">
    <property type="term" value="P:translation"/>
    <property type="evidence" value="ECO:0007669"/>
    <property type="project" value="UniProtKB-UniRule"/>
</dbReference>
<dbReference type="FunFam" id="3.90.1030.10:FF:000001">
    <property type="entry name" value="50S ribosomal protein L17"/>
    <property type="match status" value="1"/>
</dbReference>
<dbReference type="Gene3D" id="3.90.1030.10">
    <property type="entry name" value="Ribosomal protein L17"/>
    <property type="match status" value="1"/>
</dbReference>
<dbReference type="HAMAP" id="MF_01368">
    <property type="entry name" value="Ribosomal_bL17"/>
    <property type="match status" value="1"/>
</dbReference>
<dbReference type="InterPro" id="IPR000456">
    <property type="entry name" value="Ribosomal_bL17"/>
</dbReference>
<dbReference type="InterPro" id="IPR047859">
    <property type="entry name" value="Ribosomal_bL17_CS"/>
</dbReference>
<dbReference type="InterPro" id="IPR036373">
    <property type="entry name" value="Ribosomal_bL17_sf"/>
</dbReference>
<dbReference type="NCBIfam" id="TIGR00059">
    <property type="entry name" value="L17"/>
    <property type="match status" value="1"/>
</dbReference>
<dbReference type="PANTHER" id="PTHR14413:SF16">
    <property type="entry name" value="LARGE RIBOSOMAL SUBUNIT PROTEIN BL17M"/>
    <property type="match status" value="1"/>
</dbReference>
<dbReference type="PANTHER" id="PTHR14413">
    <property type="entry name" value="RIBOSOMAL PROTEIN L17"/>
    <property type="match status" value="1"/>
</dbReference>
<dbReference type="Pfam" id="PF01196">
    <property type="entry name" value="Ribosomal_L17"/>
    <property type="match status" value="1"/>
</dbReference>
<dbReference type="SUPFAM" id="SSF64263">
    <property type="entry name" value="Prokaryotic ribosomal protein L17"/>
    <property type="match status" value="1"/>
</dbReference>
<dbReference type="PROSITE" id="PS01167">
    <property type="entry name" value="RIBOSOMAL_L17"/>
    <property type="match status" value="1"/>
</dbReference>
<feature type="chain" id="PRO_1000055872" description="Large ribosomal subunit protein bL17">
    <location>
        <begin position="1"/>
        <end position="186"/>
    </location>
</feature>
<feature type="region of interest" description="Disordered" evidence="2">
    <location>
        <begin position="123"/>
        <end position="186"/>
    </location>
</feature>
<feature type="compositionally biased region" description="Low complexity" evidence="2">
    <location>
        <begin position="139"/>
        <end position="177"/>
    </location>
</feature>
<gene>
    <name evidence="1" type="primary">rplQ</name>
    <name type="ordered locus">MAV_4397</name>
</gene>
<organism>
    <name type="scientific">Mycobacterium avium (strain 104)</name>
    <dbReference type="NCBI Taxonomy" id="243243"/>
    <lineage>
        <taxon>Bacteria</taxon>
        <taxon>Bacillati</taxon>
        <taxon>Actinomycetota</taxon>
        <taxon>Actinomycetes</taxon>
        <taxon>Mycobacteriales</taxon>
        <taxon>Mycobacteriaceae</taxon>
        <taxon>Mycobacterium</taxon>
        <taxon>Mycobacterium avium complex (MAC)</taxon>
    </lineage>
</organism>
<accession>A0QKU4</accession>
<proteinExistence type="inferred from homology"/>
<protein>
    <recommendedName>
        <fullName evidence="1">Large ribosomal subunit protein bL17</fullName>
    </recommendedName>
    <alternativeName>
        <fullName evidence="3">50S ribosomal protein L17</fullName>
    </alternativeName>
</protein>
<evidence type="ECO:0000255" key="1">
    <source>
        <dbReference type="HAMAP-Rule" id="MF_01368"/>
    </source>
</evidence>
<evidence type="ECO:0000256" key="2">
    <source>
        <dbReference type="SAM" id="MobiDB-lite"/>
    </source>
</evidence>
<evidence type="ECO:0000305" key="3"/>